<name>ORND_PLAOR</name>
<dbReference type="GO" id="GO:0005576">
    <property type="term" value="C:extracellular region"/>
    <property type="evidence" value="ECO:0007669"/>
    <property type="project" value="UniProtKB-SubCell"/>
</dbReference>
<dbReference type="GO" id="GO:0007155">
    <property type="term" value="P:cell adhesion"/>
    <property type="evidence" value="ECO:0007669"/>
    <property type="project" value="UniProtKB-KW"/>
</dbReference>
<dbReference type="GO" id="GO:0030193">
    <property type="term" value="P:regulation of blood coagulation"/>
    <property type="evidence" value="ECO:0007669"/>
    <property type="project" value="InterPro"/>
</dbReference>
<dbReference type="InterPro" id="IPR002463">
    <property type="entry name" value="Ornatin"/>
</dbReference>
<dbReference type="Pfam" id="PF02088">
    <property type="entry name" value="Ornatin"/>
    <property type="match status" value="1"/>
</dbReference>
<dbReference type="PRINTS" id="PR01184">
    <property type="entry name" value="ORNATIN"/>
</dbReference>
<organism>
    <name type="scientific">Placobdella ornata</name>
    <name type="common">Turtle leech</name>
    <dbReference type="NCBI Taxonomy" id="6415"/>
    <lineage>
        <taxon>Eukaryota</taxon>
        <taxon>Metazoa</taxon>
        <taxon>Spiralia</taxon>
        <taxon>Lophotrochozoa</taxon>
        <taxon>Annelida</taxon>
        <taxon>Clitellata</taxon>
        <taxon>Hirudinea</taxon>
        <taxon>Rhynchobdellida</taxon>
        <taxon>Glossiphoniidae</taxon>
        <taxon>Placobdella</taxon>
    </lineage>
</organism>
<reference key="1">
    <citation type="journal article" date="1991" name="Eur. J. Biochem.">
        <title>Ornatins: potent glycoprotein IIb-IIIa antagonists and platelet aggregation inhibitors from the leech Placobdella ornata.</title>
        <authorList>
            <person name="Mazur P."/>
            <person name="Henzel W.J."/>
            <person name="Seymour J.L."/>
            <person name="Lazarus R.A."/>
        </authorList>
    </citation>
    <scope>PROTEIN SEQUENCE</scope>
</reference>
<proteinExistence type="evidence at protein level"/>
<feature type="chain" id="PRO_0000215264" description="Ornatin-D">
    <location>
        <begin position="1"/>
        <end position="28" status="greater than"/>
    </location>
</feature>
<feature type="non-terminal residue">
    <location>
        <position position="28"/>
    </location>
</feature>
<protein>
    <recommendedName>
        <fullName>Ornatin-D</fullName>
    </recommendedName>
</protein>
<accession>P25513</accession>
<keyword id="KW-0130">Cell adhesion</keyword>
<keyword id="KW-0903">Direct protein sequencing</keyword>
<keyword id="KW-0964">Secreted</keyword>
<evidence type="ECO:0000305" key="1"/>
<sequence length="28" mass="3361">IYVRPTKDELLYCGEFRELGQPDKKCRC</sequence>
<comment type="function">
    <text>Potent inhibitor of fibrinogen interaction with platelet receptors expressed on glycoprotein IIb-IIIa complex. May prevent blood from clotting during either feeding and/or storage of ingested blood.</text>
</comment>
<comment type="subcellular location">
    <subcellularLocation>
        <location>Secreted</location>
    </subcellularLocation>
</comment>
<comment type="similarity">
    <text evidence="1">Belongs to the ornatin family.</text>
</comment>